<protein>
    <recommendedName>
        <fullName>Altered inheritance of mitochondria protein 32</fullName>
    </recommendedName>
</protein>
<organism>
    <name type="scientific">Saccharomyces cerevisiae (strain ATCC 204508 / S288c)</name>
    <name type="common">Baker's yeast</name>
    <dbReference type="NCBI Taxonomy" id="559292"/>
    <lineage>
        <taxon>Eukaryota</taxon>
        <taxon>Fungi</taxon>
        <taxon>Dikarya</taxon>
        <taxon>Ascomycota</taxon>
        <taxon>Saccharomycotina</taxon>
        <taxon>Saccharomycetes</taxon>
        <taxon>Saccharomycetales</taxon>
        <taxon>Saccharomycetaceae</taxon>
        <taxon>Saccharomyces</taxon>
    </lineage>
</organism>
<gene>
    <name type="primary">AIM32</name>
    <name type="ordered locus">YML050W</name>
    <name type="ORF">YM9827.02</name>
</gene>
<accession>Q04689</accession>
<accession>D6VZC5</accession>
<keyword id="KW-1185">Reference proteome</keyword>
<reference key="1">
    <citation type="journal article" date="1997" name="Nature">
        <title>The nucleotide sequence of Saccharomyces cerevisiae chromosome XIII.</title>
        <authorList>
            <person name="Bowman S."/>
            <person name="Churcher C.M."/>
            <person name="Badcock K."/>
            <person name="Brown D."/>
            <person name="Chillingworth T."/>
            <person name="Connor R."/>
            <person name="Dedman K."/>
            <person name="Devlin K."/>
            <person name="Gentles S."/>
            <person name="Hamlin N."/>
            <person name="Hunt S."/>
            <person name="Jagels K."/>
            <person name="Lye G."/>
            <person name="Moule S."/>
            <person name="Odell C."/>
            <person name="Pearson D."/>
            <person name="Rajandream M.A."/>
            <person name="Rice P."/>
            <person name="Skelton J."/>
            <person name="Walsh S.V."/>
            <person name="Whitehead S."/>
            <person name="Barrell B.G."/>
        </authorList>
    </citation>
    <scope>NUCLEOTIDE SEQUENCE [LARGE SCALE GENOMIC DNA]</scope>
    <source>
        <strain>ATCC 204508 / S288c</strain>
    </source>
</reference>
<reference key="2">
    <citation type="journal article" date="2014" name="G3 (Bethesda)">
        <title>The reference genome sequence of Saccharomyces cerevisiae: Then and now.</title>
        <authorList>
            <person name="Engel S.R."/>
            <person name="Dietrich F.S."/>
            <person name="Fisk D.G."/>
            <person name="Binkley G."/>
            <person name="Balakrishnan R."/>
            <person name="Costanzo M.C."/>
            <person name="Dwight S.S."/>
            <person name="Hitz B.C."/>
            <person name="Karra K."/>
            <person name="Nash R.S."/>
            <person name="Weng S."/>
            <person name="Wong E.D."/>
            <person name="Lloyd P."/>
            <person name="Skrzypek M.S."/>
            <person name="Miyasato S.R."/>
            <person name="Simison M."/>
            <person name="Cherry J.M."/>
        </authorList>
    </citation>
    <scope>GENOME REANNOTATION</scope>
    <source>
        <strain>ATCC 204508 / S288c</strain>
    </source>
</reference>
<reference key="3">
    <citation type="journal article" date="2007" name="Genome Res.">
        <title>Approaching a complete repository of sequence-verified protein-encoding clones for Saccharomyces cerevisiae.</title>
        <authorList>
            <person name="Hu Y."/>
            <person name="Rolfs A."/>
            <person name="Bhullar B."/>
            <person name="Murthy T.V.S."/>
            <person name="Zhu C."/>
            <person name="Berger M.F."/>
            <person name="Camargo A.A."/>
            <person name="Kelley F."/>
            <person name="McCarron S."/>
            <person name="Jepson D."/>
            <person name="Richardson A."/>
            <person name="Raphael J."/>
            <person name="Moreira D."/>
            <person name="Taycher E."/>
            <person name="Zuo D."/>
            <person name="Mohr S."/>
            <person name="Kane M.F."/>
            <person name="Williamson J."/>
            <person name="Simpson A.J.G."/>
            <person name="Bulyk M.L."/>
            <person name="Harlow E."/>
            <person name="Marsischky G."/>
            <person name="Kolodner R.D."/>
            <person name="LaBaer J."/>
        </authorList>
    </citation>
    <scope>NUCLEOTIDE SEQUENCE [GENOMIC DNA]</scope>
    <source>
        <strain>ATCC 204508 / S288c</strain>
    </source>
</reference>
<reference key="4">
    <citation type="journal article" date="2009" name="PLoS Genet.">
        <title>Computationally driven, quantitative experiments discover genes required for mitochondrial biogenesis.</title>
        <authorList>
            <person name="Hess D.C."/>
            <person name="Myers C.L."/>
            <person name="Huttenhower C."/>
            <person name="Hibbs M.A."/>
            <person name="Hayes A.P."/>
            <person name="Paw J."/>
            <person name="Clore J.J."/>
            <person name="Mendoza R.M."/>
            <person name="Luis B.S."/>
            <person name="Nislow C."/>
            <person name="Giaever G."/>
            <person name="Costanzo M."/>
            <person name="Troyanskaya O.G."/>
            <person name="Caudy A.A."/>
        </authorList>
    </citation>
    <scope>DISRUPTION PHENOTYPE</scope>
</reference>
<sequence>MLRITVKTLQQRASFHHSFKHISVPDLHTRAQNDQTNCYCQEINARLPSKTDPLDPHIKLPHRTPNYNKHVLLLSPGDRFAQPWKVAWNHNLDTNTNRPYNAISKLRSHLGGSPGILINAVHLQNEFIPRPKQHDEWLYFFVIPDMKLYVIKETDIEEFASFLDEGAIQAPKLSFQDYLSGKAKASQQVHEVHHRKLTRFQGETFLRDWNLVCGHYKRDAKCGEMGPDIIAAFQDEKLFPENNLALISHIGGHIFAGNVIFYKLFGREKMQNKLDSLWFGKVYPHNLKLLCENLENGKIIDEMYRGGISMN</sequence>
<comment type="disruption phenotype">
    <text evidence="1">Increases frequency of mitochondrial genome loss.</text>
</comment>
<comment type="similarity">
    <text evidence="2">Belongs to the AIM32 family.</text>
</comment>
<dbReference type="EMBL" id="Z47816">
    <property type="protein sequence ID" value="CAA87824.1"/>
    <property type="molecule type" value="Genomic_DNA"/>
</dbReference>
<dbReference type="EMBL" id="AY557988">
    <property type="protein sequence ID" value="AAS56314.1"/>
    <property type="molecule type" value="Genomic_DNA"/>
</dbReference>
<dbReference type="EMBL" id="BK006946">
    <property type="protein sequence ID" value="DAA09849.1"/>
    <property type="molecule type" value="Genomic_DNA"/>
</dbReference>
<dbReference type="PIR" id="S50942">
    <property type="entry name" value="S50942"/>
</dbReference>
<dbReference type="RefSeq" id="NP_013662.1">
    <property type="nucleotide sequence ID" value="NM_001182408.1"/>
</dbReference>
<dbReference type="SMR" id="Q04689"/>
<dbReference type="BioGRID" id="35118">
    <property type="interactions" value="73"/>
</dbReference>
<dbReference type="FunCoup" id="Q04689">
    <property type="interactions" value="38"/>
</dbReference>
<dbReference type="STRING" id="4932.YML050W"/>
<dbReference type="TCDB" id="3.A.30.1.1">
    <property type="family name" value="the endoplasmic reticulum surface retrieval pathway (er-surf) family"/>
</dbReference>
<dbReference type="PaxDb" id="4932-YML050W"/>
<dbReference type="PeptideAtlas" id="Q04689"/>
<dbReference type="DNASU" id="854955"/>
<dbReference type="EnsemblFungi" id="YML050W_mRNA">
    <property type="protein sequence ID" value="YML050W"/>
    <property type="gene ID" value="YML050W"/>
</dbReference>
<dbReference type="GeneID" id="854955"/>
<dbReference type="KEGG" id="sce:YML050W"/>
<dbReference type="AGR" id="SGD:S000004514"/>
<dbReference type="SGD" id="S000004514">
    <property type="gene designation" value="AIM32"/>
</dbReference>
<dbReference type="VEuPathDB" id="FungiDB:YML050W"/>
<dbReference type="eggNOG" id="ENOG502QS3W">
    <property type="taxonomic scope" value="Eukaryota"/>
</dbReference>
<dbReference type="GeneTree" id="ENSGT00940000176686"/>
<dbReference type="HOGENOM" id="CLU_044499_1_0_1"/>
<dbReference type="InParanoid" id="Q04689"/>
<dbReference type="OMA" id="IPEMKIY"/>
<dbReference type="OrthoDB" id="10253744at2759"/>
<dbReference type="BioCyc" id="YEAST:G3O-32647-MONOMER"/>
<dbReference type="BioGRID-ORCS" id="854955">
    <property type="hits" value="0 hits in 10 CRISPR screens"/>
</dbReference>
<dbReference type="PRO" id="PR:Q04689"/>
<dbReference type="Proteomes" id="UP000002311">
    <property type="component" value="Chromosome XIII"/>
</dbReference>
<dbReference type="RNAct" id="Q04689">
    <property type="molecule type" value="protein"/>
</dbReference>
<dbReference type="GO" id="GO:0005758">
    <property type="term" value="C:mitochondrial intermembrane space"/>
    <property type="evidence" value="ECO:0000314"/>
    <property type="project" value="SGD"/>
</dbReference>
<dbReference type="GO" id="GO:0005759">
    <property type="term" value="C:mitochondrial matrix"/>
    <property type="evidence" value="ECO:0000314"/>
    <property type="project" value="SGD"/>
</dbReference>
<dbReference type="GO" id="GO:0045454">
    <property type="term" value="P:cell redox homeostasis"/>
    <property type="evidence" value="ECO:0000315"/>
    <property type="project" value="SGD"/>
</dbReference>
<dbReference type="GO" id="GO:0065003">
    <property type="term" value="P:protein-containing complex assembly"/>
    <property type="evidence" value="ECO:0000315"/>
    <property type="project" value="SGD"/>
</dbReference>
<dbReference type="CDD" id="cd03062">
    <property type="entry name" value="TRX_Fd_Sucrase"/>
    <property type="match status" value="1"/>
</dbReference>
<dbReference type="InterPro" id="IPR009737">
    <property type="entry name" value="Aim32/Apd1-like"/>
</dbReference>
<dbReference type="InterPro" id="IPR036249">
    <property type="entry name" value="Thioredoxin-like_sf"/>
</dbReference>
<dbReference type="PANTHER" id="PTHR31902">
    <property type="entry name" value="ACTIN PATCHES DISTAL PROTEIN 1"/>
    <property type="match status" value="1"/>
</dbReference>
<dbReference type="PANTHER" id="PTHR31902:SF7">
    <property type="entry name" value="ALTERED INHERITANCE OF MITOCHONDRIA PROTEIN 32"/>
    <property type="match status" value="1"/>
</dbReference>
<dbReference type="Pfam" id="PF06999">
    <property type="entry name" value="Suc_Fer-like"/>
    <property type="match status" value="1"/>
</dbReference>
<dbReference type="SUPFAM" id="SSF52833">
    <property type="entry name" value="Thioredoxin-like"/>
    <property type="match status" value="1"/>
</dbReference>
<feature type="chain" id="PRO_0000203255" description="Altered inheritance of mitochondria protein 32">
    <location>
        <begin position="1"/>
        <end position="311"/>
    </location>
</feature>
<evidence type="ECO:0000269" key="1">
    <source>
    </source>
</evidence>
<evidence type="ECO:0000305" key="2"/>
<proteinExistence type="inferred from homology"/>
<name>AIM32_YEAST</name>